<feature type="chain" id="PRO_0000425405" description="Protein trichome birefringence-like 40">
    <location>
        <begin position="1"/>
        <end position="364"/>
    </location>
</feature>
<feature type="transmembrane region" description="Helical; Signal-anchor for type II membrane protein" evidence="3">
    <location>
        <begin position="9"/>
        <end position="25"/>
    </location>
</feature>
<feature type="short sequence motif" description="GDS motif">
    <location>
        <begin position="118"/>
        <end position="120"/>
    </location>
</feature>
<feature type="short sequence motif" description="DCXHWCLPGXXDXWN motif">
    <location>
        <begin position="341"/>
        <end position="355"/>
    </location>
</feature>
<feature type="splice variant" id="VSP_053695" description="In isoform 2." evidence="4">
    <original>MGLCFQLNLASLSLILFSSFPGLLAQSQQHFLGQNNTSLLSGGRCNLARGKWVYDSSYPLYSAFSCPFIDSEFNCQKAGRPDTNYQHFRWQPFSCPLPRFDGANFMRRMRGKKIMMVGDSLSLNMFESLACLLHASLPNAKYSLRRSQPLTSLTFQ</original>
    <variation>MTVKPKEK</variation>
    <location>
        <begin position="1"/>
        <end position="156"/>
    </location>
</feature>
<feature type="sequence conflict" description="In Ref. 4; AAM65091." evidence="4" ref="4">
    <original>G</original>
    <variation>V</variation>
    <location>
        <position position="2"/>
    </location>
</feature>
<feature type="sequence conflict" description="In Ref. 3; BAD44658." evidence="4" ref="3">
    <original>V</original>
    <variation>M</variation>
    <location>
        <position position="233"/>
    </location>
</feature>
<protein>
    <recommendedName>
        <fullName>Protein trichome birefringence-like 40</fullName>
    </recommendedName>
</protein>
<accession>Q67XC4</accession>
<accession>F4IPX4</accession>
<accession>F4IPX5</accession>
<accession>O82273</accession>
<accession>Q84W32</accession>
<accession>Q8LAX5</accession>
<gene>
    <name type="primary">TBL40</name>
    <name type="ordered locus">At2g31110</name>
    <name type="ORF">T16B12.8</name>
</gene>
<dbReference type="EMBL" id="AC005311">
    <property type="protein sequence ID" value="AAC63848.1"/>
    <property type="status" value="ALT_SEQ"/>
    <property type="molecule type" value="Genomic_DNA"/>
</dbReference>
<dbReference type="EMBL" id="CP002685">
    <property type="protein sequence ID" value="AEC08494.1"/>
    <property type="molecule type" value="Genomic_DNA"/>
</dbReference>
<dbReference type="EMBL" id="CP002685">
    <property type="protein sequence ID" value="AEC08495.1"/>
    <property type="molecule type" value="Genomic_DNA"/>
</dbReference>
<dbReference type="EMBL" id="AK176895">
    <property type="protein sequence ID" value="BAD44658.1"/>
    <property type="molecule type" value="mRNA"/>
</dbReference>
<dbReference type="EMBL" id="AY087549">
    <property type="protein sequence ID" value="AAM65091.1"/>
    <property type="molecule type" value="mRNA"/>
</dbReference>
<dbReference type="EMBL" id="BT004296">
    <property type="protein sequence ID" value="AAO42294.1"/>
    <property type="molecule type" value="mRNA"/>
</dbReference>
<dbReference type="PIR" id="F84716">
    <property type="entry name" value="F84716"/>
</dbReference>
<dbReference type="RefSeq" id="NP_001077985.1">
    <molecule id="Q67XC4-1"/>
    <property type="nucleotide sequence ID" value="NM_001084516.2"/>
</dbReference>
<dbReference type="RefSeq" id="NP_180669.2">
    <molecule id="Q67XC4-2"/>
    <property type="nucleotide sequence ID" value="NM_128667.2"/>
</dbReference>
<dbReference type="SMR" id="Q67XC4"/>
<dbReference type="FunCoup" id="Q67XC4">
    <property type="interactions" value="1"/>
</dbReference>
<dbReference type="PaxDb" id="3702-AT2G31110.2"/>
<dbReference type="ProteomicsDB" id="234264">
    <molecule id="Q67XC4-1"/>
</dbReference>
<dbReference type="EnsemblPlants" id="AT2G31110.1">
    <molecule id="Q67XC4-2"/>
    <property type="protein sequence ID" value="AT2G31110.1"/>
    <property type="gene ID" value="AT2G31110"/>
</dbReference>
<dbReference type="EnsemblPlants" id="AT2G31110.2">
    <molecule id="Q67XC4-1"/>
    <property type="protein sequence ID" value="AT2G31110.2"/>
    <property type="gene ID" value="AT2G31110"/>
</dbReference>
<dbReference type="GeneID" id="817667"/>
<dbReference type="Gramene" id="AT2G31110.1">
    <molecule id="Q67XC4-2"/>
    <property type="protein sequence ID" value="AT2G31110.1"/>
    <property type="gene ID" value="AT2G31110"/>
</dbReference>
<dbReference type="Gramene" id="AT2G31110.2">
    <molecule id="Q67XC4-1"/>
    <property type="protein sequence ID" value="AT2G31110.2"/>
    <property type="gene ID" value="AT2G31110"/>
</dbReference>
<dbReference type="KEGG" id="ath:AT2G31110"/>
<dbReference type="Araport" id="AT2G31110"/>
<dbReference type="TAIR" id="AT2G31110"/>
<dbReference type="eggNOG" id="ENOG502QQWH">
    <property type="taxonomic scope" value="Eukaryota"/>
</dbReference>
<dbReference type="InParanoid" id="Q67XC4"/>
<dbReference type="OMA" id="WINHNID"/>
<dbReference type="OrthoDB" id="630188at2759"/>
<dbReference type="PRO" id="PR:Q67XC4"/>
<dbReference type="Proteomes" id="UP000006548">
    <property type="component" value="Chromosome 2"/>
</dbReference>
<dbReference type="ExpressionAtlas" id="Q67XC4">
    <property type="expression patterns" value="baseline and differential"/>
</dbReference>
<dbReference type="GO" id="GO:0016020">
    <property type="term" value="C:membrane"/>
    <property type="evidence" value="ECO:0007669"/>
    <property type="project" value="UniProtKB-SubCell"/>
</dbReference>
<dbReference type="GO" id="GO:0016413">
    <property type="term" value="F:O-acetyltransferase activity"/>
    <property type="evidence" value="ECO:0007669"/>
    <property type="project" value="InterPro"/>
</dbReference>
<dbReference type="InterPro" id="IPR029962">
    <property type="entry name" value="TBL"/>
</dbReference>
<dbReference type="InterPro" id="IPR026057">
    <property type="entry name" value="TBL_C"/>
</dbReference>
<dbReference type="InterPro" id="IPR025846">
    <property type="entry name" value="TBL_N"/>
</dbReference>
<dbReference type="PANTHER" id="PTHR32285:SF173">
    <property type="entry name" value="PROTEIN TRICHOME BIREFRINGENCE-LIKE 40"/>
    <property type="match status" value="1"/>
</dbReference>
<dbReference type="PANTHER" id="PTHR32285">
    <property type="entry name" value="PROTEIN TRICHOME BIREFRINGENCE-LIKE 9-RELATED"/>
    <property type="match status" value="1"/>
</dbReference>
<dbReference type="Pfam" id="PF13839">
    <property type="entry name" value="PC-Esterase"/>
    <property type="match status" value="1"/>
</dbReference>
<dbReference type="Pfam" id="PF14416">
    <property type="entry name" value="PMR5N"/>
    <property type="match status" value="1"/>
</dbReference>
<name>TBL40_ARATH</name>
<organism>
    <name type="scientific">Arabidopsis thaliana</name>
    <name type="common">Mouse-ear cress</name>
    <dbReference type="NCBI Taxonomy" id="3702"/>
    <lineage>
        <taxon>Eukaryota</taxon>
        <taxon>Viridiplantae</taxon>
        <taxon>Streptophyta</taxon>
        <taxon>Embryophyta</taxon>
        <taxon>Tracheophyta</taxon>
        <taxon>Spermatophyta</taxon>
        <taxon>Magnoliopsida</taxon>
        <taxon>eudicotyledons</taxon>
        <taxon>Gunneridae</taxon>
        <taxon>Pentapetalae</taxon>
        <taxon>rosids</taxon>
        <taxon>malvids</taxon>
        <taxon>Brassicales</taxon>
        <taxon>Brassicaceae</taxon>
        <taxon>Camelineae</taxon>
        <taxon>Arabidopsis</taxon>
    </lineage>
</organism>
<reference key="1">
    <citation type="journal article" date="1999" name="Nature">
        <title>Sequence and analysis of chromosome 2 of the plant Arabidopsis thaliana.</title>
        <authorList>
            <person name="Lin X."/>
            <person name="Kaul S."/>
            <person name="Rounsley S.D."/>
            <person name="Shea T.P."/>
            <person name="Benito M.-I."/>
            <person name="Town C.D."/>
            <person name="Fujii C.Y."/>
            <person name="Mason T.M."/>
            <person name="Bowman C.L."/>
            <person name="Barnstead M.E."/>
            <person name="Feldblyum T.V."/>
            <person name="Buell C.R."/>
            <person name="Ketchum K.A."/>
            <person name="Lee J.J."/>
            <person name="Ronning C.M."/>
            <person name="Koo H.L."/>
            <person name="Moffat K.S."/>
            <person name="Cronin L.A."/>
            <person name="Shen M."/>
            <person name="Pai G."/>
            <person name="Van Aken S."/>
            <person name="Umayam L."/>
            <person name="Tallon L.J."/>
            <person name="Gill J.E."/>
            <person name="Adams M.D."/>
            <person name="Carrera A.J."/>
            <person name="Creasy T.H."/>
            <person name="Goodman H.M."/>
            <person name="Somerville C.R."/>
            <person name="Copenhaver G.P."/>
            <person name="Preuss D."/>
            <person name="Nierman W.C."/>
            <person name="White O."/>
            <person name="Eisen J.A."/>
            <person name="Salzberg S.L."/>
            <person name="Fraser C.M."/>
            <person name="Venter J.C."/>
        </authorList>
    </citation>
    <scope>NUCLEOTIDE SEQUENCE [LARGE SCALE GENOMIC DNA]</scope>
    <source>
        <strain>cv. Columbia</strain>
    </source>
</reference>
<reference key="2">
    <citation type="journal article" date="2017" name="Plant J.">
        <title>Araport11: a complete reannotation of the Arabidopsis thaliana reference genome.</title>
        <authorList>
            <person name="Cheng C.Y."/>
            <person name="Krishnakumar V."/>
            <person name="Chan A.P."/>
            <person name="Thibaud-Nissen F."/>
            <person name="Schobel S."/>
            <person name="Town C.D."/>
        </authorList>
    </citation>
    <scope>GENOME REANNOTATION</scope>
    <source>
        <strain>cv. Columbia</strain>
    </source>
</reference>
<reference key="3">
    <citation type="submission" date="2004-09" db="EMBL/GenBank/DDBJ databases">
        <title>Large-scale analysis of RIKEN Arabidopsis full-length (RAFL) cDNAs.</title>
        <authorList>
            <person name="Totoki Y."/>
            <person name="Seki M."/>
            <person name="Ishida J."/>
            <person name="Nakajima M."/>
            <person name="Enju A."/>
            <person name="Kamiya A."/>
            <person name="Narusaka M."/>
            <person name="Shin-i T."/>
            <person name="Nakagawa M."/>
            <person name="Sakamoto N."/>
            <person name="Oishi K."/>
            <person name="Kohara Y."/>
            <person name="Kobayashi M."/>
            <person name="Toyoda A."/>
            <person name="Sakaki Y."/>
            <person name="Sakurai T."/>
            <person name="Iida K."/>
            <person name="Akiyama K."/>
            <person name="Satou M."/>
            <person name="Toyoda T."/>
            <person name="Konagaya A."/>
            <person name="Carninci P."/>
            <person name="Kawai J."/>
            <person name="Hayashizaki Y."/>
            <person name="Shinozaki K."/>
        </authorList>
    </citation>
    <scope>NUCLEOTIDE SEQUENCE [LARGE SCALE MRNA] (ISOFORM 1)</scope>
    <source>
        <strain>cv. Columbia</strain>
    </source>
</reference>
<reference key="4">
    <citation type="submission" date="2002-03" db="EMBL/GenBank/DDBJ databases">
        <title>Full-length cDNA from Arabidopsis thaliana.</title>
        <authorList>
            <person name="Brover V.V."/>
            <person name="Troukhan M.E."/>
            <person name="Alexandrov N.A."/>
            <person name="Lu Y.-P."/>
            <person name="Flavell R.B."/>
            <person name="Feldmann K.A."/>
        </authorList>
    </citation>
    <scope>NUCLEOTIDE SEQUENCE [LARGE SCALE MRNA] (ISOFORM 1)</scope>
</reference>
<reference key="5">
    <citation type="journal article" date="2003" name="Science">
        <title>Empirical analysis of transcriptional activity in the Arabidopsis genome.</title>
        <authorList>
            <person name="Yamada K."/>
            <person name="Lim J."/>
            <person name="Dale J.M."/>
            <person name="Chen H."/>
            <person name="Shinn P."/>
            <person name="Palm C.J."/>
            <person name="Southwick A.M."/>
            <person name="Wu H.C."/>
            <person name="Kim C.J."/>
            <person name="Nguyen M."/>
            <person name="Pham P.K."/>
            <person name="Cheuk R.F."/>
            <person name="Karlin-Newmann G."/>
            <person name="Liu S.X."/>
            <person name="Lam B."/>
            <person name="Sakano H."/>
            <person name="Wu T."/>
            <person name="Yu G."/>
            <person name="Miranda M."/>
            <person name="Quach H.L."/>
            <person name="Tripp M."/>
            <person name="Chang C.H."/>
            <person name="Lee J.M."/>
            <person name="Toriumi M.J."/>
            <person name="Chan M.M."/>
            <person name="Tang C.C."/>
            <person name="Onodera C.S."/>
            <person name="Deng J.M."/>
            <person name="Akiyama K."/>
            <person name="Ansari Y."/>
            <person name="Arakawa T."/>
            <person name="Banh J."/>
            <person name="Banno F."/>
            <person name="Bowser L."/>
            <person name="Brooks S.Y."/>
            <person name="Carninci P."/>
            <person name="Chao Q."/>
            <person name="Choy N."/>
            <person name="Enju A."/>
            <person name="Goldsmith A.D."/>
            <person name="Gurjal M."/>
            <person name="Hansen N.F."/>
            <person name="Hayashizaki Y."/>
            <person name="Johnson-Hopson C."/>
            <person name="Hsuan V.W."/>
            <person name="Iida K."/>
            <person name="Karnes M."/>
            <person name="Khan S."/>
            <person name="Koesema E."/>
            <person name="Ishida J."/>
            <person name="Jiang P.X."/>
            <person name="Jones T."/>
            <person name="Kawai J."/>
            <person name="Kamiya A."/>
            <person name="Meyers C."/>
            <person name="Nakajima M."/>
            <person name="Narusaka M."/>
            <person name="Seki M."/>
            <person name="Sakurai T."/>
            <person name="Satou M."/>
            <person name="Tamse R."/>
            <person name="Vaysberg M."/>
            <person name="Wallender E.K."/>
            <person name="Wong C."/>
            <person name="Yamamura Y."/>
            <person name="Yuan S."/>
            <person name="Shinozaki K."/>
            <person name="Davis R.W."/>
            <person name="Theologis A."/>
            <person name="Ecker J.R."/>
        </authorList>
    </citation>
    <scope>NUCLEOTIDE SEQUENCE [LARGE SCALE MRNA] OF 8-364 (ISOFORM 1)</scope>
    <source>
        <strain>cv. Columbia</strain>
    </source>
</reference>
<reference key="6">
    <citation type="journal article" date="2007" name="Plant J.">
        <title>Arabidopsis ESK1 encodes a novel regulator of freezing tolerance.</title>
        <authorList>
            <person name="Xin Z."/>
            <person name="Mandaokar A."/>
            <person name="Chen J."/>
            <person name="Last R.L."/>
            <person name="Browse J."/>
        </authorList>
    </citation>
    <scope>GENE FAMILY</scope>
    <source>
        <strain>cv. Columbia</strain>
    </source>
</reference>
<reference key="7">
    <citation type="journal article" date="2010" name="Plant Physiol.">
        <title>TRICHOME BIREFRINGENCE and its homolog AT5G01360 encode plant-specific DUF231 proteins required for cellulose biosynthesis in Arabidopsis.</title>
        <authorList>
            <person name="Bischoff V."/>
            <person name="Nita S."/>
            <person name="Neumetzler L."/>
            <person name="Schindelasch D."/>
            <person name="Urbain A."/>
            <person name="Eshed R."/>
            <person name="Persson S."/>
            <person name="Delmer D."/>
            <person name="Scheible W.R."/>
        </authorList>
    </citation>
    <scope>GENE FAMILY</scope>
    <scope>NOMENCLATURE</scope>
</reference>
<reference key="8">
    <citation type="journal article" date="2010" name="Plant Signal. Behav.">
        <title>Involvement of TBL/DUF231 proteins into cell wall biology.</title>
        <authorList>
            <person name="Bischoff V."/>
            <person name="Selbig J."/>
            <person name="Scheible W.R."/>
        </authorList>
    </citation>
    <scope>3D-STRUCTURE MODELING</scope>
</reference>
<proteinExistence type="evidence at transcript level"/>
<evidence type="ECO:0000250" key="1">
    <source>
        <dbReference type="UniProtKB" id="Q9FG35"/>
    </source>
</evidence>
<evidence type="ECO:0000250" key="2">
    <source>
        <dbReference type="UniProtKB" id="Q9LY46"/>
    </source>
</evidence>
<evidence type="ECO:0000255" key="3"/>
<evidence type="ECO:0000305" key="4"/>
<evidence type="ECO:0000305" key="5">
    <source>
    </source>
</evidence>
<sequence length="364" mass="41768">MGLCFQLNLASLSLILFSSFPGLLAQSQQHFLGQNNTSLLSGGRCNLARGKWVYDSSYPLYSAFSCPFIDSEFNCQKAGRPDTNYQHFRWQPFSCPLPRFDGANFMRRMRGKKIMMVGDSLSLNMFESLACLLHASLPNAKYSLRRSQPLTSLTFQDYGVTINLYRTQFLVDVVQEKAGRVLVLDSIKQADAWLGMDVLIFNSWHWWTHTSGLQPWDYMREGNQLYKDMNRLVAYYKGLNTWARWINNNIVPSRTQVFFQGVSPVHYDGREWNEPLKSCNGQTQPFMGQRYPGGLPLGWVVVNKVLSRIRKPVHLLDLTTLSEYRKDAHPSLYNGISKDLDCSHWCLPGLPDTWNLLLYSSLTS</sequence>
<keyword id="KW-0025">Alternative splicing</keyword>
<keyword id="KW-0472">Membrane</keyword>
<keyword id="KW-1185">Reference proteome</keyword>
<keyword id="KW-0735">Signal-anchor</keyword>
<keyword id="KW-0812">Transmembrane</keyword>
<keyword id="KW-1133">Transmembrane helix</keyword>
<comment type="function">
    <text evidence="1 2">May act as a bridging protein that binds pectin and other cell wall polysaccharides. Probably involved in maintaining esterification of pectins (By similarity). May be involved in the specific O-acetylation of cell wall polymers (By similarity).</text>
</comment>
<comment type="subcellular location">
    <subcellularLocation>
        <location evidence="4">Membrane</location>
        <topology evidence="4">Single-pass type II membrane protein</topology>
    </subcellularLocation>
</comment>
<comment type="alternative products">
    <event type="alternative splicing"/>
    <isoform>
        <id>Q67XC4-1</id>
        <name>1</name>
        <sequence type="displayed"/>
    </isoform>
    <isoform>
        <id>Q67XC4-2</id>
        <name>2</name>
        <sequence type="described" ref="VSP_053695"/>
    </isoform>
</comment>
<comment type="miscellaneous">
    <text evidence="5">Contains 2 motifs that are conserved in esterases, but it is unlikely that this protein belongs to the catalytically active pectin esterases.</text>
</comment>
<comment type="similarity">
    <text evidence="4">Belongs to the PC-esterase family. TBL subfamily.</text>
</comment>
<comment type="sequence caution" evidence="4">
    <conflict type="erroneous gene model prediction">
        <sequence resource="EMBL-CDS" id="AAC63848"/>
    </conflict>
</comment>